<evidence type="ECO:0000255" key="1">
    <source>
        <dbReference type="HAMAP-Rule" id="MF_01897"/>
    </source>
</evidence>
<evidence type="ECO:0000255" key="2">
    <source>
        <dbReference type="PROSITE-ProRule" id="PRU01384"/>
    </source>
</evidence>
<proteinExistence type="inferred from homology"/>
<protein>
    <recommendedName>
        <fullName evidence="1">DNA gyrase subunit A</fullName>
        <ecNumber evidence="1">5.6.2.2</ecNumber>
    </recommendedName>
</protein>
<feature type="chain" id="PRO_0000145269" description="DNA gyrase subunit A">
    <location>
        <begin position="1"/>
        <end position="860"/>
    </location>
</feature>
<feature type="domain" description="Topo IIA-type catalytic" evidence="2">
    <location>
        <begin position="34"/>
        <end position="503"/>
    </location>
</feature>
<feature type="short sequence motif" description="GyrA-box" evidence="1">
    <location>
        <begin position="530"/>
        <end position="536"/>
    </location>
</feature>
<feature type="active site" description="O-(5'-phospho-DNA)-tyrosine intermediate" evidence="1">
    <location>
        <position position="122"/>
    </location>
</feature>
<organism>
    <name type="scientific">Synechocystis sp. (strain ATCC 27184 / PCC 6803 / Kazusa)</name>
    <dbReference type="NCBI Taxonomy" id="1111708"/>
    <lineage>
        <taxon>Bacteria</taxon>
        <taxon>Bacillati</taxon>
        <taxon>Cyanobacteriota</taxon>
        <taxon>Cyanophyceae</taxon>
        <taxon>Synechococcales</taxon>
        <taxon>Merismopediaceae</taxon>
        <taxon>Synechocystis</taxon>
    </lineage>
</organism>
<accession>Q55738</accession>
<sequence>MTDSPDRLIATDLRNEMSQSYLEYAMSVIVGRALPDARDGLKPVHRRILYAMYELGLTPDRPFRKCARVVGEVLGKYHPHGDTAVYDALVRMAQDFSMREPLIDGHGNFGSVDNDPPAAMRYTESRLRPLSTNSLLRDIEAETVDFIDNFDGSQQEPTVLPARIPQLLINGSSGIAVGMATNIPPHNLGEVIDGAIALIRNPEITEQELMQIIPGPDFPTGAQILGRSGIREAYLTGRGSITMRGVASIETMEHPGRPDRDAIIVTELPYQTNKAALIERIADLVNDKKIDGIADIRDESDRDGMRIVIELKRDAYARVVLNNLYKQTPIQSNFGANLLALVNGTPEVLTIKKFLTVFWEFRIETITRRTRYELRKAEERDHLLQGLLIALDNLDAVIRLIRGAADTASAKTELVEGFSLSEVQADAILQMQLRRLTALEADKITAEHDELQTKIADFQDILARRERVNAIIEEELEQIKAIHATPRRTVIVQEDGELIDTDLIANDQALILLTEQGYIKRMPASTFGTQNRATRGKAAAKIKDDDGVEHFLSCCDHDKVLFFSDRGVVYSLNAYQIPIASRTARGVPIVQMLPIPKDEKITSLVSVSEFDDDTYFIMLTKQGYIKKTALSAFSNIRANGLIAISLVEGDQLRWVRLAKAEDSVIIGSQKGMAIHFKADQDELRALGRATRGVKSMRLRSGDALISMDILPSQVVANIAVGSEDEPDEDLGGDTDAILEESDNPGPWLLGVTMKGFGKRVPIGQFRLQHRAGLGVKAIRFKSKDDQLVALHVVNADDELMIVTNRGIIIRQSVNDISPQSRSATGVRVQRLDADDAIAAVALVPPSGEEELAEMSESEES</sequence>
<reference key="1">
    <citation type="journal article" date="1995" name="DNA Res.">
        <title>Sequence analysis of the genome of the unicellular cyanobacterium Synechocystis sp. strain PCC6803. I. Sequence features in the 1 Mb region from map positions 64% to 92% of the genome.</title>
        <authorList>
            <person name="Kaneko T."/>
            <person name="Tanaka A."/>
            <person name="Sato S."/>
            <person name="Kotani H."/>
            <person name="Sazuka T."/>
            <person name="Miyajima N."/>
            <person name="Sugiura M."/>
            <person name="Tabata S."/>
        </authorList>
    </citation>
    <scope>NUCLEOTIDE SEQUENCE [LARGE SCALE GENOMIC DNA]</scope>
    <source>
        <strain>ATCC 27184 / PCC 6803 / N-1</strain>
    </source>
</reference>
<reference key="2">
    <citation type="journal article" date="1996" name="DNA Res.">
        <title>Sequence analysis of the genome of the unicellular cyanobacterium Synechocystis sp. strain PCC6803. II. Sequence determination of the entire genome and assignment of potential protein-coding regions.</title>
        <authorList>
            <person name="Kaneko T."/>
            <person name="Sato S."/>
            <person name="Kotani H."/>
            <person name="Tanaka A."/>
            <person name="Asamizu E."/>
            <person name="Nakamura Y."/>
            <person name="Miyajima N."/>
            <person name="Hirosawa M."/>
            <person name="Sugiura M."/>
            <person name="Sasamoto S."/>
            <person name="Kimura T."/>
            <person name="Hosouchi T."/>
            <person name="Matsuno A."/>
            <person name="Muraki A."/>
            <person name="Nakazaki N."/>
            <person name="Naruo K."/>
            <person name="Okumura S."/>
            <person name="Shimpo S."/>
            <person name="Takeuchi C."/>
            <person name="Wada T."/>
            <person name="Watanabe A."/>
            <person name="Yamada M."/>
            <person name="Yasuda M."/>
            <person name="Tabata S."/>
        </authorList>
    </citation>
    <scope>NUCLEOTIDE SEQUENCE [LARGE SCALE GENOMIC DNA]</scope>
    <source>
        <strain>ATCC 27184 / PCC 6803 / Kazusa</strain>
    </source>
</reference>
<keyword id="KW-0067">ATP-binding</keyword>
<keyword id="KW-0963">Cytoplasm</keyword>
<keyword id="KW-0238">DNA-binding</keyword>
<keyword id="KW-0413">Isomerase</keyword>
<keyword id="KW-0547">Nucleotide-binding</keyword>
<keyword id="KW-1185">Reference proteome</keyword>
<keyword id="KW-0799">Topoisomerase</keyword>
<gene>
    <name evidence="1" type="primary">gyrA</name>
    <name type="ordered locus">slr0417</name>
</gene>
<dbReference type="EC" id="5.6.2.2" evidence="1"/>
<dbReference type="EMBL" id="BA000022">
    <property type="protein sequence ID" value="BAA10380.1"/>
    <property type="molecule type" value="Genomic_DNA"/>
</dbReference>
<dbReference type="PIR" id="S76534">
    <property type="entry name" value="S76534"/>
</dbReference>
<dbReference type="SMR" id="Q55738"/>
<dbReference type="FunCoup" id="Q55738">
    <property type="interactions" value="438"/>
</dbReference>
<dbReference type="IntAct" id="Q55738">
    <property type="interactions" value="1"/>
</dbReference>
<dbReference type="STRING" id="1148.gene:10499881"/>
<dbReference type="PaxDb" id="1148-1001649"/>
<dbReference type="EnsemblBacteria" id="BAA10380">
    <property type="protein sequence ID" value="BAA10380"/>
    <property type="gene ID" value="BAA10380"/>
</dbReference>
<dbReference type="KEGG" id="syn:slr0417"/>
<dbReference type="eggNOG" id="COG0188">
    <property type="taxonomic scope" value="Bacteria"/>
</dbReference>
<dbReference type="InParanoid" id="Q55738"/>
<dbReference type="PhylomeDB" id="Q55738"/>
<dbReference type="Proteomes" id="UP000001425">
    <property type="component" value="Chromosome"/>
</dbReference>
<dbReference type="GO" id="GO:0005694">
    <property type="term" value="C:chromosome"/>
    <property type="evidence" value="ECO:0007669"/>
    <property type="project" value="InterPro"/>
</dbReference>
<dbReference type="GO" id="GO:0005737">
    <property type="term" value="C:cytoplasm"/>
    <property type="evidence" value="ECO:0000318"/>
    <property type="project" value="GO_Central"/>
</dbReference>
<dbReference type="GO" id="GO:0009330">
    <property type="term" value="C:DNA topoisomerase type II (double strand cut, ATP-hydrolyzing) complex"/>
    <property type="evidence" value="ECO:0000318"/>
    <property type="project" value="GO_Central"/>
</dbReference>
<dbReference type="GO" id="GO:0005524">
    <property type="term" value="F:ATP binding"/>
    <property type="evidence" value="ECO:0000318"/>
    <property type="project" value="GO_Central"/>
</dbReference>
<dbReference type="GO" id="GO:0003677">
    <property type="term" value="F:DNA binding"/>
    <property type="evidence" value="ECO:0000318"/>
    <property type="project" value="GO_Central"/>
</dbReference>
<dbReference type="GO" id="GO:0034335">
    <property type="term" value="F:DNA negative supercoiling activity"/>
    <property type="evidence" value="ECO:0007669"/>
    <property type="project" value="UniProtKB-ARBA"/>
</dbReference>
<dbReference type="GO" id="GO:0006265">
    <property type="term" value="P:DNA topological change"/>
    <property type="evidence" value="ECO:0000318"/>
    <property type="project" value="GO_Central"/>
</dbReference>
<dbReference type="GO" id="GO:0006261">
    <property type="term" value="P:DNA-templated DNA replication"/>
    <property type="evidence" value="ECO:0007669"/>
    <property type="project" value="UniProtKB-UniRule"/>
</dbReference>
<dbReference type="CDD" id="cd00187">
    <property type="entry name" value="TOP4c"/>
    <property type="match status" value="1"/>
</dbReference>
<dbReference type="FunFam" id="1.10.268.10:FF:000001">
    <property type="entry name" value="DNA gyrase subunit A"/>
    <property type="match status" value="1"/>
</dbReference>
<dbReference type="FunFam" id="2.120.10.90:FF:000007">
    <property type="entry name" value="DNA gyrase subunit A"/>
    <property type="match status" value="1"/>
</dbReference>
<dbReference type="FunFam" id="3.30.1360.40:FF:000002">
    <property type="entry name" value="DNA gyrase subunit A"/>
    <property type="match status" value="1"/>
</dbReference>
<dbReference type="FunFam" id="3.90.199.10:FF:000001">
    <property type="entry name" value="DNA gyrase subunit A"/>
    <property type="match status" value="1"/>
</dbReference>
<dbReference type="Gene3D" id="3.30.1360.40">
    <property type="match status" value="1"/>
</dbReference>
<dbReference type="Gene3D" id="2.120.10.90">
    <property type="entry name" value="DNA gyrase/topoisomerase IV, subunit A, C-terminal"/>
    <property type="match status" value="1"/>
</dbReference>
<dbReference type="Gene3D" id="3.90.199.10">
    <property type="entry name" value="Topoisomerase II, domain 5"/>
    <property type="match status" value="1"/>
</dbReference>
<dbReference type="Gene3D" id="1.10.268.10">
    <property type="entry name" value="Topoisomerase, domain 3"/>
    <property type="match status" value="1"/>
</dbReference>
<dbReference type="HAMAP" id="MF_01897">
    <property type="entry name" value="GyrA"/>
    <property type="match status" value="1"/>
</dbReference>
<dbReference type="InterPro" id="IPR005743">
    <property type="entry name" value="GyrA"/>
</dbReference>
<dbReference type="InterPro" id="IPR006691">
    <property type="entry name" value="GyrA/parC_rep"/>
</dbReference>
<dbReference type="InterPro" id="IPR035516">
    <property type="entry name" value="Gyrase/topoIV_suA_C"/>
</dbReference>
<dbReference type="InterPro" id="IPR013760">
    <property type="entry name" value="Topo_IIA-like_dom_sf"/>
</dbReference>
<dbReference type="InterPro" id="IPR013758">
    <property type="entry name" value="Topo_IIA_A/C_ab"/>
</dbReference>
<dbReference type="InterPro" id="IPR013757">
    <property type="entry name" value="Topo_IIA_A_a_sf"/>
</dbReference>
<dbReference type="InterPro" id="IPR002205">
    <property type="entry name" value="Topo_IIA_dom_A"/>
</dbReference>
<dbReference type="InterPro" id="IPR050220">
    <property type="entry name" value="Type_II_DNA_Topoisomerases"/>
</dbReference>
<dbReference type="NCBIfam" id="TIGR01063">
    <property type="entry name" value="gyrA"/>
    <property type="match status" value="1"/>
</dbReference>
<dbReference type="NCBIfam" id="NF004043">
    <property type="entry name" value="PRK05560.1"/>
    <property type="match status" value="1"/>
</dbReference>
<dbReference type="NCBIfam" id="NF004044">
    <property type="entry name" value="PRK05561.1"/>
    <property type="match status" value="1"/>
</dbReference>
<dbReference type="PANTHER" id="PTHR43493:SF5">
    <property type="entry name" value="DNA GYRASE SUBUNIT A, CHLOROPLASTIC_MITOCHONDRIAL"/>
    <property type="match status" value="1"/>
</dbReference>
<dbReference type="PANTHER" id="PTHR43493">
    <property type="entry name" value="DNA GYRASE/TOPOISOMERASE SUBUNIT A"/>
    <property type="match status" value="1"/>
</dbReference>
<dbReference type="Pfam" id="PF03989">
    <property type="entry name" value="DNA_gyraseA_C"/>
    <property type="match status" value="6"/>
</dbReference>
<dbReference type="Pfam" id="PF00521">
    <property type="entry name" value="DNA_topoisoIV"/>
    <property type="match status" value="1"/>
</dbReference>
<dbReference type="SMART" id="SM00434">
    <property type="entry name" value="TOP4c"/>
    <property type="match status" value="1"/>
</dbReference>
<dbReference type="SUPFAM" id="SSF101904">
    <property type="entry name" value="GyrA/ParC C-terminal domain-like"/>
    <property type="match status" value="1"/>
</dbReference>
<dbReference type="SUPFAM" id="SSF56719">
    <property type="entry name" value="Type II DNA topoisomerase"/>
    <property type="match status" value="1"/>
</dbReference>
<dbReference type="PROSITE" id="PS52040">
    <property type="entry name" value="TOPO_IIA"/>
    <property type="match status" value="1"/>
</dbReference>
<comment type="function">
    <text evidence="1">A type II topoisomerase that negatively supercoils closed circular double-stranded (ds) DNA in an ATP-dependent manner to modulate DNA topology and maintain chromosomes in an underwound state. Negative supercoiling favors strand separation, and DNA replication, transcription, recombination and repair, all of which involve strand separation. Also able to catalyze the interconversion of other topological isomers of dsDNA rings, including catenanes and knotted rings. Type II topoisomerases break and join 2 DNA strands simultaneously in an ATP-dependent manner.</text>
</comment>
<comment type="catalytic activity">
    <reaction evidence="1">
        <text>ATP-dependent breakage, passage and rejoining of double-stranded DNA.</text>
        <dbReference type="EC" id="5.6.2.2"/>
    </reaction>
</comment>
<comment type="subunit">
    <text evidence="1">Heterotetramer, composed of two GyrA and two GyrB chains. In the heterotetramer, GyrA contains the active site tyrosine that forms a transient covalent intermediate with DNA, while GyrB binds cofactors and catalyzes ATP hydrolysis.</text>
</comment>
<comment type="subcellular location">
    <subcellularLocation>
        <location evidence="1">Cytoplasm</location>
    </subcellularLocation>
</comment>
<comment type="miscellaneous">
    <text evidence="1">Few gyrases are as efficient as E.coli at forming negative supercoils. Not all organisms have 2 type II topoisomerases; in organisms with a single type II topoisomerase this enzyme also has to decatenate newly replicated chromosomes.</text>
</comment>
<comment type="similarity">
    <text evidence="1">Belongs to the type II topoisomerase GyrA/ParC subunit family.</text>
</comment>
<name>GYRA_SYNY3</name>